<accession>B4KY72</accession>
<protein>
    <recommendedName>
        <fullName evidence="2">SAGA-associated factor 11 homolog</fullName>
    </recommendedName>
</protein>
<organism>
    <name type="scientific">Drosophila mojavensis</name>
    <name type="common">Fruit fly</name>
    <dbReference type="NCBI Taxonomy" id="7230"/>
    <lineage>
        <taxon>Eukaryota</taxon>
        <taxon>Metazoa</taxon>
        <taxon>Ecdysozoa</taxon>
        <taxon>Arthropoda</taxon>
        <taxon>Hexapoda</taxon>
        <taxon>Insecta</taxon>
        <taxon>Pterygota</taxon>
        <taxon>Neoptera</taxon>
        <taxon>Endopterygota</taxon>
        <taxon>Diptera</taxon>
        <taxon>Brachycera</taxon>
        <taxon>Muscomorpha</taxon>
        <taxon>Ephydroidea</taxon>
        <taxon>Drosophilidae</taxon>
        <taxon>Drosophila</taxon>
    </lineage>
</organism>
<proteinExistence type="inferred from homology"/>
<feature type="chain" id="PRO_0000367526" description="SAGA-associated factor 11 homolog">
    <location>
        <begin position="1"/>
        <end position="211"/>
    </location>
</feature>
<feature type="zinc finger region" description="SGF11-type" evidence="2">
    <location>
        <begin position="115"/>
        <end position="136"/>
    </location>
</feature>
<feature type="region of interest" description="Disordered" evidence="3">
    <location>
        <begin position="153"/>
        <end position="211"/>
    </location>
</feature>
<feature type="compositionally biased region" description="Low complexity" evidence="3">
    <location>
        <begin position="157"/>
        <end position="166"/>
    </location>
</feature>
<feature type="compositionally biased region" description="Low complexity" evidence="3">
    <location>
        <begin position="197"/>
        <end position="211"/>
    </location>
</feature>
<feature type="modified residue" description="Phosphoserine" evidence="1">
    <location>
        <position position="187"/>
    </location>
</feature>
<reference key="1">
    <citation type="journal article" date="2007" name="Nature">
        <title>Evolution of genes and genomes on the Drosophila phylogeny.</title>
        <authorList>
            <consortium name="Drosophila 12 genomes consortium"/>
        </authorList>
    </citation>
    <scope>NUCLEOTIDE SEQUENCE [LARGE SCALE GENOMIC DNA]</scope>
    <source>
        <strain>Tucson 15081-1352.22</strain>
    </source>
</reference>
<dbReference type="EMBL" id="CH933809">
    <property type="protein sequence ID" value="EDW19791.1"/>
    <property type="molecule type" value="Genomic_DNA"/>
</dbReference>
<dbReference type="FunCoup" id="B4KY72">
    <property type="interactions" value="232"/>
</dbReference>
<dbReference type="EnsemblMetazoa" id="FBtr0162034">
    <property type="protein sequence ID" value="FBpp0160526"/>
    <property type="gene ID" value="FBgn0134070"/>
</dbReference>
<dbReference type="EnsemblMetazoa" id="XM_002009279.4">
    <property type="protein sequence ID" value="XP_002009315.1"/>
    <property type="gene ID" value="LOC6583650"/>
</dbReference>
<dbReference type="GeneID" id="6583650"/>
<dbReference type="KEGG" id="dmo:Dmoj_GI11309"/>
<dbReference type="CTD" id="40035"/>
<dbReference type="eggNOG" id="KOG2612">
    <property type="taxonomic scope" value="Eukaryota"/>
</dbReference>
<dbReference type="HOGENOM" id="CLU_100743_0_0_1"/>
<dbReference type="InParanoid" id="B4KY72"/>
<dbReference type="OMA" id="RMCEMPN"/>
<dbReference type="OrthoDB" id="21557at2759"/>
<dbReference type="PhylomeDB" id="B4KY72"/>
<dbReference type="Proteomes" id="UP000009192">
    <property type="component" value="Unassembled WGS sequence"/>
</dbReference>
<dbReference type="GO" id="GO:0005737">
    <property type="term" value="C:cytoplasm"/>
    <property type="evidence" value="ECO:0007669"/>
    <property type="project" value="UniProtKB-SubCell"/>
</dbReference>
<dbReference type="GO" id="GO:0071819">
    <property type="term" value="C:DUBm complex"/>
    <property type="evidence" value="ECO:0007669"/>
    <property type="project" value="UniProtKB-UniRule"/>
</dbReference>
<dbReference type="GO" id="GO:0005643">
    <property type="term" value="C:nuclear pore"/>
    <property type="evidence" value="ECO:0007669"/>
    <property type="project" value="UniProtKB-UniRule"/>
</dbReference>
<dbReference type="GO" id="GO:0005654">
    <property type="term" value="C:nucleoplasm"/>
    <property type="evidence" value="ECO:0007669"/>
    <property type="project" value="UniProtKB-SubCell"/>
</dbReference>
<dbReference type="GO" id="GO:0000124">
    <property type="term" value="C:SAGA complex"/>
    <property type="evidence" value="ECO:0000250"/>
    <property type="project" value="UniProtKB"/>
</dbReference>
<dbReference type="GO" id="GO:0003713">
    <property type="term" value="F:transcription coactivator activity"/>
    <property type="evidence" value="ECO:0007669"/>
    <property type="project" value="UniProtKB-UniRule"/>
</dbReference>
<dbReference type="GO" id="GO:0008270">
    <property type="term" value="F:zinc ion binding"/>
    <property type="evidence" value="ECO:0007669"/>
    <property type="project" value="UniProtKB-UniRule"/>
</dbReference>
<dbReference type="GO" id="GO:0006325">
    <property type="term" value="P:chromatin organization"/>
    <property type="evidence" value="ECO:0000250"/>
    <property type="project" value="UniProtKB"/>
</dbReference>
<dbReference type="GO" id="GO:0006406">
    <property type="term" value="P:mRNA export from nucleus"/>
    <property type="evidence" value="ECO:0007669"/>
    <property type="project" value="UniProtKB-UniRule"/>
</dbReference>
<dbReference type="GO" id="GO:0045893">
    <property type="term" value="P:positive regulation of DNA-templated transcription"/>
    <property type="evidence" value="ECO:0000250"/>
    <property type="project" value="UniProtKB"/>
</dbReference>
<dbReference type="GO" id="GO:0015031">
    <property type="term" value="P:protein transport"/>
    <property type="evidence" value="ECO:0007669"/>
    <property type="project" value="UniProtKB-KW"/>
</dbReference>
<dbReference type="GO" id="GO:0006357">
    <property type="term" value="P:regulation of transcription by RNA polymerase II"/>
    <property type="evidence" value="ECO:0007669"/>
    <property type="project" value="TreeGrafter"/>
</dbReference>
<dbReference type="FunFam" id="3.30.160.60:FF:000118">
    <property type="entry name" value="Ataxin-7-like protein 3"/>
    <property type="match status" value="1"/>
</dbReference>
<dbReference type="Gene3D" id="3.30.160.60">
    <property type="entry name" value="Classic Zinc Finger"/>
    <property type="match status" value="1"/>
</dbReference>
<dbReference type="HAMAP" id="MF_03047">
    <property type="entry name" value="Sgf11"/>
    <property type="match status" value="1"/>
</dbReference>
<dbReference type="InterPro" id="IPR013246">
    <property type="entry name" value="SAGA_su_Sgf11"/>
</dbReference>
<dbReference type="InterPro" id="IPR051078">
    <property type="entry name" value="SGF11"/>
</dbReference>
<dbReference type="PANTHER" id="PTHR46367">
    <property type="entry name" value="ATAXIN-7-LIKE PROTEIN 3"/>
    <property type="match status" value="1"/>
</dbReference>
<dbReference type="PANTHER" id="PTHR46367:SF1">
    <property type="entry name" value="ATAXIN-7-LIKE PROTEIN 3"/>
    <property type="match status" value="1"/>
</dbReference>
<dbReference type="Pfam" id="PF08209">
    <property type="entry name" value="Sgf11"/>
    <property type="match status" value="1"/>
</dbReference>
<name>SGF11_DROMO</name>
<keyword id="KW-0010">Activator</keyword>
<keyword id="KW-0156">Chromatin regulator</keyword>
<keyword id="KW-0963">Cytoplasm</keyword>
<keyword id="KW-0479">Metal-binding</keyword>
<keyword id="KW-0509">mRNA transport</keyword>
<keyword id="KW-0539">Nucleus</keyword>
<keyword id="KW-0597">Phosphoprotein</keyword>
<keyword id="KW-0653">Protein transport</keyword>
<keyword id="KW-1185">Reference proteome</keyword>
<keyword id="KW-0804">Transcription</keyword>
<keyword id="KW-0805">Transcription regulation</keyword>
<keyword id="KW-0811">Translocation</keyword>
<keyword id="KW-0813">Transport</keyword>
<keyword id="KW-0862">Zinc</keyword>
<keyword id="KW-0863">Zinc-finger</keyword>
<sequence>MSASNATHTHLSSSGGASQMATTQGHLTASAITLNFRELIKEPKGLEDAANYLFQGLLDDVVAGIFIEIHHLRKTGNLTALDGVGEENAESAYRICEMPNLDIFGISTAKKPMDCTCPHCDRLVAAARFAPHLEKCMGMGRISSRIASRRLATKEGASASSSSTSTYIQSGGNTGGTDDEDDVDWSSDKRKKKSTQNSRNNGSKKNNGKIF</sequence>
<gene>
    <name evidence="2" type="primary">Sgf11</name>
    <name type="ORF">GI11309</name>
</gene>
<comment type="function">
    <text evidence="2">Component of the transcription regulatory histone acetylation (HAT) complex SAGA, a multiprotein complex that activates transcription by remodeling chromatin and mediating histone acetylation and deubiquitination. Within the SAGA complex, participates in a subcomplex that specifically deubiquitinates histone H2B. The SAGA complex is recruited to specific gene promoters by activators, where it is required for transcription. Required for nuclear receptor-mediated transactivation. Binds independently on SAGA to promoters in an RNA-dependent manner. Binds to mRNA and is essential for total mRNA export from the nucleus. Required to counteract heterochromatin silencing. Controls the development of neuronal connectivity in visual system by being required for accurate axon targeting in the optic lobe. Required for expression of ecdysone-induced genes such as br/broad.</text>
</comment>
<comment type="subunit">
    <text evidence="2">Component of some SAGA transcription coactivator-HAT complexes, at least composed of Ada2b, not/nonstop, Pcaf/Gcn5, Sgf11 and Spt3. Within the SAGA complex, Sgf11, e(y)2, and not/nonstop form an additional subcomplex of SAGA called the DUB module (deubiquitination module). Interacts directly with not/nonstop. Interacts with the AMEX complex component xmas-2. Interacts with Cbp80; important for promoter recruitment of Sgf11 that is not associated with the DUB module.</text>
</comment>
<comment type="subcellular location">
    <subcellularLocation>
        <location evidence="2">Nucleus</location>
        <location evidence="2">Nucleoplasm</location>
    </subcellularLocation>
    <subcellularLocation>
        <location evidence="2">Cytoplasm</location>
    </subcellularLocation>
    <text evidence="2">Localizes to nuclear periphery, in contact with the nuclear pore complex (NPC).</text>
</comment>
<comment type="domain">
    <text evidence="2">The long N-terminal helix forms part of the 'assembly lobe' of the SAGA deubiquitination module.</text>
</comment>
<comment type="domain">
    <text evidence="2">The C-terminal SGF11-type zinc-finger domain together with the C-terminal catalytic domain of not/nonstop forms the 'catalytic lobe' of the SAGA deubiquitination module.</text>
</comment>
<comment type="similarity">
    <text evidence="2">Belongs to the SGF11 family.</text>
</comment>
<evidence type="ECO:0000250" key="1"/>
<evidence type="ECO:0000255" key="2">
    <source>
        <dbReference type="HAMAP-Rule" id="MF_03047"/>
    </source>
</evidence>
<evidence type="ECO:0000256" key="3">
    <source>
        <dbReference type="SAM" id="MobiDB-lite"/>
    </source>
</evidence>